<gene>
    <name type="primary">trpC</name>
    <name type="synonym">trpC/F</name>
</gene>
<name>TRPC_BUCDN</name>
<sequence length="453" mass="52108">MKETILEKIVKNKYEWIKFRKKKQPLITFKNHINTKTRNFYNSLKEKNPVFILECKKKSPSLGIIKKNFNLIDIAKIYNKYASAISVLTDEKYFDGKLEFINIVRERVSQPILCKDFFIDPFQIYLARYYNADAILLMLSILDDFQYQKLSKIAKELNMGILTEVNNTSELKRAIKLNANIIGINNRNLHDLSINLNRTRILSSLIPKNIIIISESGITKYKQIRYLSQFVNGFLIGSHLMSEKQLEIGVRSLILGENKICGLTRSCDIEIAEKYGAVYGGLIFAPSSLRKISKNTAKKIIFNNTLRNVGVFQNENIEIVKNIAEELNLYAVQLHGQEDQKYVKKLRQTLSINIQIWKAFSIDSKIPDLNWDHIHKYVLDSQFGGSNKCFNWSILKHQILENVILAGGINSNNCIKASKLNCSGLDLNSGIEVSPGIKDHKKIKSVFQKLRYY</sequence>
<reference key="1">
    <citation type="journal article" date="1998" name="Curr. Microbiol.">
        <title>The endosymbiont (Buchnera) of the aphid Diuraphis noxia contains all the genes of the tryptophan biosynthetic pathway.</title>
        <authorList>
            <person name="Baumann L."/>
            <person name="Baumann P."/>
            <person name="Moran N.A."/>
        </authorList>
    </citation>
    <scope>NUCLEOTIDE SEQUENCE [GENOMIC DNA]</scope>
</reference>
<accession>O68427</accession>
<feature type="chain" id="PRO_0000154274" description="Tryptophan biosynthesis protein TrpCF">
    <location>
        <begin position="1"/>
        <end position="453"/>
    </location>
</feature>
<feature type="region of interest" description="Indole-3-glycerol phosphate synthase">
    <location>
        <begin position="1"/>
        <end position="257"/>
    </location>
</feature>
<feature type="region of interest" description="N-(5'-phosphoribosyl)anthranilate isomerase">
    <location>
        <begin position="258"/>
        <end position="453"/>
    </location>
</feature>
<organism>
    <name type="scientific">Buchnera aphidicola subsp. Diuraphis noxia</name>
    <dbReference type="NCBI Taxonomy" id="118101"/>
    <lineage>
        <taxon>Bacteria</taxon>
        <taxon>Pseudomonadati</taxon>
        <taxon>Pseudomonadota</taxon>
        <taxon>Gammaproteobacteria</taxon>
        <taxon>Enterobacterales</taxon>
        <taxon>Erwiniaceae</taxon>
        <taxon>Buchnera</taxon>
    </lineage>
</organism>
<keyword id="KW-0028">Amino-acid biosynthesis</keyword>
<keyword id="KW-0057">Aromatic amino acid biosynthesis</keyword>
<keyword id="KW-0210">Decarboxylase</keyword>
<keyword id="KW-0413">Isomerase</keyword>
<keyword id="KW-0456">Lyase</keyword>
<keyword id="KW-0511">Multifunctional enzyme</keyword>
<keyword id="KW-0822">Tryptophan biosynthesis</keyword>
<evidence type="ECO:0000250" key="1"/>
<evidence type="ECO:0000305" key="2"/>
<proteinExistence type="inferred from homology"/>
<protein>
    <recommendedName>
        <fullName>Tryptophan biosynthesis protein TrpCF</fullName>
    </recommendedName>
    <domain>
        <recommendedName>
            <fullName>Indole-3-glycerol phosphate synthase</fullName>
            <shortName>IGPS</shortName>
            <ecNumber>4.1.1.48</ecNumber>
        </recommendedName>
    </domain>
    <domain>
        <recommendedName>
            <fullName>N-(5'-phospho-ribosyl)anthranilate isomerase</fullName>
            <shortName>PRAI</shortName>
            <ecNumber>5.3.1.24</ecNumber>
        </recommendedName>
    </domain>
</protein>
<dbReference type="EC" id="4.1.1.48"/>
<dbReference type="EC" id="5.3.1.24"/>
<dbReference type="EMBL" id="AF038565">
    <property type="protein sequence ID" value="AAC27734.1"/>
    <property type="molecule type" value="Genomic_DNA"/>
</dbReference>
<dbReference type="SMR" id="O68427"/>
<dbReference type="STRING" id="118101.ATN01_01385"/>
<dbReference type="UniPathway" id="UPA00035">
    <property type="reaction ID" value="UER00042"/>
</dbReference>
<dbReference type="UniPathway" id="UPA00035">
    <property type="reaction ID" value="UER00043"/>
</dbReference>
<dbReference type="GO" id="GO:0004425">
    <property type="term" value="F:indole-3-glycerol-phosphate synthase activity"/>
    <property type="evidence" value="ECO:0007669"/>
    <property type="project" value="UniProtKB-UniRule"/>
</dbReference>
<dbReference type="GO" id="GO:0004640">
    <property type="term" value="F:phosphoribosylanthranilate isomerase activity"/>
    <property type="evidence" value="ECO:0007669"/>
    <property type="project" value="UniProtKB-UniRule"/>
</dbReference>
<dbReference type="GO" id="GO:0000162">
    <property type="term" value="P:L-tryptophan biosynthetic process"/>
    <property type="evidence" value="ECO:0007669"/>
    <property type="project" value="UniProtKB-UniRule"/>
</dbReference>
<dbReference type="CDD" id="cd00331">
    <property type="entry name" value="IGPS"/>
    <property type="match status" value="1"/>
</dbReference>
<dbReference type="CDD" id="cd00405">
    <property type="entry name" value="PRAI"/>
    <property type="match status" value="1"/>
</dbReference>
<dbReference type="FunFam" id="3.20.20.70:FF:000024">
    <property type="entry name" value="Indole-3-glycerol phosphate synthase"/>
    <property type="match status" value="1"/>
</dbReference>
<dbReference type="Gene3D" id="3.20.20.70">
    <property type="entry name" value="Aldolase class I"/>
    <property type="match status" value="2"/>
</dbReference>
<dbReference type="HAMAP" id="MF_00134_B">
    <property type="entry name" value="IGPS_B"/>
    <property type="match status" value="1"/>
</dbReference>
<dbReference type="HAMAP" id="MF_00135">
    <property type="entry name" value="PRAI"/>
    <property type="match status" value="1"/>
</dbReference>
<dbReference type="InterPro" id="IPR013785">
    <property type="entry name" value="Aldolase_TIM"/>
</dbReference>
<dbReference type="InterPro" id="IPR045186">
    <property type="entry name" value="Indole-3-glycerol_P_synth"/>
</dbReference>
<dbReference type="InterPro" id="IPR013798">
    <property type="entry name" value="Indole-3-glycerol_P_synth_dom"/>
</dbReference>
<dbReference type="InterPro" id="IPR001468">
    <property type="entry name" value="Indole-3-GlycerolPSynthase_CS"/>
</dbReference>
<dbReference type="InterPro" id="IPR001240">
    <property type="entry name" value="PRAI_dom"/>
</dbReference>
<dbReference type="InterPro" id="IPR011060">
    <property type="entry name" value="RibuloseP-bd_barrel"/>
</dbReference>
<dbReference type="NCBIfam" id="NF006945">
    <property type="entry name" value="PRK09427.1"/>
    <property type="match status" value="1"/>
</dbReference>
<dbReference type="PANTHER" id="PTHR22854:SF2">
    <property type="entry name" value="INDOLE-3-GLYCEROL-PHOSPHATE SYNTHASE"/>
    <property type="match status" value="1"/>
</dbReference>
<dbReference type="PANTHER" id="PTHR22854">
    <property type="entry name" value="TRYPTOPHAN BIOSYNTHESIS PROTEIN"/>
    <property type="match status" value="1"/>
</dbReference>
<dbReference type="Pfam" id="PF00218">
    <property type="entry name" value="IGPS"/>
    <property type="match status" value="1"/>
</dbReference>
<dbReference type="Pfam" id="PF00697">
    <property type="entry name" value="PRAI"/>
    <property type="match status" value="1"/>
</dbReference>
<dbReference type="SUPFAM" id="SSF51366">
    <property type="entry name" value="Ribulose-phoshate binding barrel"/>
    <property type="match status" value="2"/>
</dbReference>
<dbReference type="PROSITE" id="PS00614">
    <property type="entry name" value="IGPS"/>
    <property type="match status" value="1"/>
</dbReference>
<comment type="function">
    <text evidence="1">Bifunctional enzyme that catalyzes two sequential steps of tryptophan biosynthetic pathway. The first reaction is catalyzed by the isomerase, coded by the TrpF domain; the second reaction is catalyzed by the synthase, coded by the TrpC domain (By similarity).</text>
</comment>
<comment type="catalytic activity">
    <reaction>
        <text>N-(5-phospho-beta-D-ribosyl)anthranilate = 1-(2-carboxyphenylamino)-1-deoxy-D-ribulose 5-phosphate</text>
        <dbReference type="Rhea" id="RHEA:21540"/>
        <dbReference type="ChEBI" id="CHEBI:18277"/>
        <dbReference type="ChEBI" id="CHEBI:58613"/>
        <dbReference type="EC" id="5.3.1.24"/>
    </reaction>
</comment>
<comment type="catalytic activity">
    <reaction>
        <text>1-(2-carboxyphenylamino)-1-deoxy-D-ribulose 5-phosphate + H(+) = (1S,2R)-1-C-(indol-3-yl)glycerol 3-phosphate + CO2 + H2O</text>
        <dbReference type="Rhea" id="RHEA:23476"/>
        <dbReference type="ChEBI" id="CHEBI:15377"/>
        <dbReference type="ChEBI" id="CHEBI:15378"/>
        <dbReference type="ChEBI" id="CHEBI:16526"/>
        <dbReference type="ChEBI" id="CHEBI:58613"/>
        <dbReference type="ChEBI" id="CHEBI:58866"/>
        <dbReference type="EC" id="4.1.1.48"/>
    </reaction>
</comment>
<comment type="pathway">
    <text>Amino-acid biosynthesis; L-tryptophan biosynthesis; L-tryptophan from chorismate: step 3/5.</text>
</comment>
<comment type="pathway">
    <text>Amino-acid biosynthesis; L-tryptophan biosynthesis; L-tryptophan from chorismate: step 4/5.</text>
</comment>
<comment type="similarity">
    <text evidence="2">In the N-terminal section; belongs to the TrpC family.</text>
</comment>
<comment type="similarity">
    <text evidence="2">In the C-terminal section; belongs to the TrpF family.</text>
</comment>